<gene>
    <name evidence="1" type="primary">lgt</name>
    <name type="ordered locus">LBA0677</name>
</gene>
<evidence type="ECO:0000255" key="1">
    <source>
        <dbReference type="HAMAP-Rule" id="MF_01147"/>
    </source>
</evidence>
<dbReference type="EC" id="2.5.1.145" evidence="1"/>
<dbReference type="EMBL" id="CP000033">
    <property type="protein sequence ID" value="AAV42553.1"/>
    <property type="molecule type" value="Genomic_DNA"/>
</dbReference>
<dbReference type="RefSeq" id="YP_193584.1">
    <property type="nucleotide sequence ID" value="NC_006814.3"/>
</dbReference>
<dbReference type="SMR" id="Q5FL71"/>
<dbReference type="STRING" id="272621.LBA0677"/>
<dbReference type="KEGG" id="lac:LBA0677"/>
<dbReference type="PATRIC" id="fig|272621.13.peg.647"/>
<dbReference type="eggNOG" id="COG0682">
    <property type="taxonomic scope" value="Bacteria"/>
</dbReference>
<dbReference type="HOGENOM" id="CLU_013386_0_1_9"/>
<dbReference type="OrthoDB" id="871140at2"/>
<dbReference type="BioCyc" id="LACI272621:G1G49-699-MONOMER"/>
<dbReference type="UniPathway" id="UPA00664"/>
<dbReference type="Proteomes" id="UP000006381">
    <property type="component" value="Chromosome"/>
</dbReference>
<dbReference type="GO" id="GO:0005886">
    <property type="term" value="C:plasma membrane"/>
    <property type="evidence" value="ECO:0007669"/>
    <property type="project" value="UniProtKB-SubCell"/>
</dbReference>
<dbReference type="GO" id="GO:0008961">
    <property type="term" value="F:phosphatidylglycerol-prolipoprotein diacylglyceryl transferase activity"/>
    <property type="evidence" value="ECO:0007669"/>
    <property type="project" value="UniProtKB-UniRule"/>
</dbReference>
<dbReference type="GO" id="GO:0042158">
    <property type="term" value="P:lipoprotein biosynthetic process"/>
    <property type="evidence" value="ECO:0007669"/>
    <property type="project" value="UniProtKB-UniRule"/>
</dbReference>
<dbReference type="HAMAP" id="MF_01147">
    <property type="entry name" value="Lgt"/>
    <property type="match status" value="1"/>
</dbReference>
<dbReference type="InterPro" id="IPR001640">
    <property type="entry name" value="Lgt"/>
</dbReference>
<dbReference type="NCBIfam" id="TIGR00544">
    <property type="entry name" value="lgt"/>
    <property type="match status" value="1"/>
</dbReference>
<dbReference type="PANTHER" id="PTHR30589:SF0">
    <property type="entry name" value="PHOSPHATIDYLGLYCEROL--PROLIPOPROTEIN DIACYLGLYCERYL TRANSFERASE"/>
    <property type="match status" value="1"/>
</dbReference>
<dbReference type="PANTHER" id="PTHR30589">
    <property type="entry name" value="PROLIPOPROTEIN DIACYLGLYCERYL TRANSFERASE"/>
    <property type="match status" value="1"/>
</dbReference>
<dbReference type="Pfam" id="PF01790">
    <property type="entry name" value="LGT"/>
    <property type="match status" value="1"/>
</dbReference>
<dbReference type="PROSITE" id="PS01311">
    <property type="entry name" value="LGT"/>
    <property type="match status" value="1"/>
</dbReference>
<name>LGT_LACAC</name>
<proteinExistence type="inferred from homology"/>
<accession>Q5FL71</accession>
<organism>
    <name type="scientific">Lactobacillus acidophilus (strain ATCC 700396 / NCK56 / N2 / NCFM)</name>
    <dbReference type="NCBI Taxonomy" id="272621"/>
    <lineage>
        <taxon>Bacteria</taxon>
        <taxon>Bacillati</taxon>
        <taxon>Bacillota</taxon>
        <taxon>Bacilli</taxon>
        <taxon>Lactobacillales</taxon>
        <taxon>Lactobacillaceae</taxon>
        <taxon>Lactobacillus</taxon>
    </lineage>
</organism>
<protein>
    <recommendedName>
        <fullName evidence="1">Phosphatidylglycerol--prolipoprotein diacylglyceryl transferase</fullName>
        <ecNumber evidence="1">2.5.1.145</ecNumber>
    </recommendedName>
</protein>
<sequence length="280" mass="32182">MMTKLVINPVAFQLGSLSVKWYGIIMAVAIVLATWMAISEGKKRQIISDDFVDLLLWAVPLGYVGARIYYVIFEWGYYSKHPNQIIAIWNGGIAIYGGLIAGLIVLLIFCHKRDLPPFLMLDIITPGVMAAQILGRWGNFVNQEAHGGPTTLHFLQSLHLPEFVIQQMKIGGTYYQPTFLYESFFNLIGLIIILSLRHRKHVFKQGEVFMSYLLWYSVVRFFVEGMRTDSLYIFGIIRVSQALSLVLFIATIILWIYRRKVVKPKWYLQGSGLKYPYTRD</sequence>
<feature type="chain" id="PRO_0000172615" description="Phosphatidylglycerol--prolipoprotein diacylglyceryl transferase">
    <location>
        <begin position="1"/>
        <end position="280"/>
    </location>
</feature>
<feature type="transmembrane region" description="Helical" evidence="1">
    <location>
        <begin position="21"/>
        <end position="41"/>
    </location>
</feature>
<feature type="transmembrane region" description="Helical" evidence="1">
    <location>
        <begin position="54"/>
        <end position="74"/>
    </location>
</feature>
<feature type="transmembrane region" description="Helical" evidence="1">
    <location>
        <begin position="88"/>
        <end position="108"/>
    </location>
</feature>
<feature type="transmembrane region" description="Helical" evidence="1">
    <location>
        <begin position="176"/>
        <end position="196"/>
    </location>
</feature>
<feature type="transmembrane region" description="Helical" evidence="1">
    <location>
        <begin position="206"/>
        <end position="226"/>
    </location>
</feature>
<feature type="transmembrane region" description="Helical" evidence="1">
    <location>
        <begin position="236"/>
        <end position="256"/>
    </location>
</feature>
<feature type="binding site" evidence="1">
    <location>
        <position position="136"/>
    </location>
    <ligand>
        <name>a 1,2-diacyl-sn-glycero-3-phospho-(1'-sn-glycerol)</name>
        <dbReference type="ChEBI" id="CHEBI:64716"/>
    </ligand>
</feature>
<reference key="1">
    <citation type="journal article" date="2005" name="Proc. Natl. Acad. Sci. U.S.A.">
        <title>Complete genome sequence of the probiotic lactic acid bacterium Lactobacillus acidophilus NCFM.</title>
        <authorList>
            <person name="Altermann E."/>
            <person name="Russell W.M."/>
            <person name="Azcarate-Peril M.A."/>
            <person name="Barrangou R."/>
            <person name="Buck B.L."/>
            <person name="McAuliffe O."/>
            <person name="Souther N."/>
            <person name="Dobson A."/>
            <person name="Duong T."/>
            <person name="Callanan M."/>
            <person name="Lick S."/>
            <person name="Hamrick A."/>
            <person name="Cano R."/>
            <person name="Klaenhammer T.R."/>
        </authorList>
    </citation>
    <scope>NUCLEOTIDE SEQUENCE [LARGE SCALE GENOMIC DNA]</scope>
    <source>
        <strain>ATCC 700396 / NCK56 / N2 / NCFM</strain>
    </source>
</reference>
<comment type="function">
    <text evidence="1">Catalyzes the transfer of the diacylglyceryl group from phosphatidylglycerol to the sulfhydryl group of the N-terminal cysteine of a prolipoprotein, the first step in the formation of mature lipoproteins.</text>
</comment>
<comment type="catalytic activity">
    <reaction evidence="1">
        <text>L-cysteinyl-[prolipoprotein] + a 1,2-diacyl-sn-glycero-3-phospho-(1'-sn-glycerol) = an S-1,2-diacyl-sn-glyceryl-L-cysteinyl-[prolipoprotein] + sn-glycerol 1-phosphate + H(+)</text>
        <dbReference type="Rhea" id="RHEA:56712"/>
        <dbReference type="Rhea" id="RHEA-COMP:14679"/>
        <dbReference type="Rhea" id="RHEA-COMP:14680"/>
        <dbReference type="ChEBI" id="CHEBI:15378"/>
        <dbReference type="ChEBI" id="CHEBI:29950"/>
        <dbReference type="ChEBI" id="CHEBI:57685"/>
        <dbReference type="ChEBI" id="CHEBI:64716"/>
        <dbReference type="ChEBI" id="CHEBI:140658"/>
        <dbReference type="EC" id="2.5.1.145"/>
    </reaction>
</comment>
<comment type="pathway">
    <text evidence="1">Protein modification; lipoprotein biosynthesis (diacylglyceryl transfer).</text>
</comment>
<comment type="subcellular location">
    <subcellularLocation>
        <location evidence="1">Cell membrane</location>
        <topology evidence="1">Multi-pass membrane protein</topology>
    </subcellularLocation>
</comment>
<comment type="similarity">
    <text evidence="1">Belongs to the Lgt family.</text>
</comment>
<keyword id="KW-1003">Cell membrane</keyword>
<keyword id="KW-0472">Membrane</keyword>
<keyword id="KW-1185">Reference proteome</keyword>
<keyword id="KW-0808">Transferase</keyword>
<keyword id="KW-0812">Transmembrane</keyword>
<keyword id="KW-1133">Transmembrane helix</keyword>